<dbReference type="EC" id="5.4.99.25" evidence="1"/>
<dbReference type="EMBL" id="AE004439">
    <property type="protein sequence ID" value="AAK02840.1"/>
    <property type="molecule type" value="Genomic_DNA"/>
</dbReference>
<dbReference type="RefSeq" id="WP_010906837.1">
    <property type="nucleotide sequence ID" value="NC_002663.1"/>
</dbReference>
<dbReference type="SMR" id="Q9CMQ7"/>
<dbReference type="STRING" id="272843.PM0756"/>
<dbReference type="EnsemblBacteria" id="AAK02840">
    <property type="protein sequence ID" value="AAK02840"/>
    <property type="gene ID" value="PM0756"/>
</dbReference>
<dbReference type="KEGG" id="pmu:PM0756"/>
<dbReference type="PATRIC" id="fig|272843.6.peg.765"/>
<dbReference type="HOGENOM" id="CLU_032087_0_3_6"/>
<dbReference type="OrthoDB" id="9802309at2"/>
<dbReference type="Proteomes" id="UP000000809">
    <property type="component" value="Chromosome"/>
</dbReference>
<dbReference type="GO" id="GO:0003723">
    <property type="term" value="F:RNA binding"/>
    <property type="evidence" value="ECO:0007669"/>
    <property type="project" value="InterPro"/>
</dbReference>
<dbReference type="GO" id="GO:0160148">
    <property type="term" value="F:tRNA pseudouridine(55) synthase activity"/>
    <property type="evidence" value="ECO:0007669"/>
    <property type="project" value="UniProtKB-EC"/>
</dbReference>
<dbReference type="GO" id="GO:1990481">
    <property type="term" value="P:mRNA pseudouridine synthesis"/>
    <property type="evidence" value="ECO:0007669"/>
    <property type="project" value="TreeGrafter"/>
</dbReference>
<dbReference type="GO" id="GO:0031119">
    <property type="term" value="P:tRNA pseudouridine synthesis"/>
    <property type="evidence" value="ECO:0007669"/>
    <property type="project" value="UniProtKB-UniRule"/>
</dbReference>
<dbReference type="CDD" id="cd02573">
    <property type="entry name" value="PseudoU_synth_EcTruB"/>
    <property type="match status" value="1"/>
</dbReference>
<dbReference type="CDD" id="cd21152">
    <property type="entry name" value="PUA_TruB_bacterial"/>
    <property type="match status" value="1"/>
</dbReference>
<dbReference type="FunFam" id="3.30.2350.10:FF:000003">
    <property type="entry name" value="tRNA pseudouridine synthase B"/>
    <property type="match status" value="1"/>
</dbReference>
<dbReference type="Gene3D" id="3.30.2350.10">
    <property type="entry name" value="Pseudouridine synthase"/>
    <property type="match status" value="1"/>
</dbReference>
<dbReference type="Gene3D" id="2.30.130.10">
    <property type="entry name" value="PUA domain"/>
    <property type="match status" value="1"/>
</dbReference>
<dbReference type="HAMAP" id="MF_01080">
    <property type="entry name" value="TruB_bact"/>
    <property type="match status" value="1"/>
</dbReference>
<dbReference type="InterPro" id="IPR020103">
    <property type="entry name" value="PsdUridine_synth_cat_dom_sf"/>
</dbReference>
<dbReference type="InterPro" id="IPR002501">
    <property type="entry name" value="PsdUridine_synth_N"/>
</dbReference>
<dbReference type="InterPro" id="IPR015947">
    <property type="entry name" value="PUA-like_sf"/>
</dbReference>
<dbReference type="InterPro" id="IPR036974">
    <property type="entry name" value="PUA_sf"/>
</dbReference>
<dbReference type="InterPro" id="IPR014780">
    <property type="entry name" value="tRNA_psdUridine_synth_TruB"/>
</dbReference>
<dbReference type="InterPro" id="IPR015240">
    <property type="entry name" value="tRNA_sdUridine_synth_fam1_C"/>
</dbReference>
<dbReference type="InterPro" id="IPR032819">
    <property type="entry name" value="TruB_C"/>
</dbReference>
<dbReference type="NCBIfam" id="TIGR00431">
    <property type="entry name" value="TruB"/>
    <property type="match status" value="1"/>
</dbReference>
<dbReference type="PANTHER" id="PTHR13767:SF2">
    <property type="entry name" value="PSEUDOURIDYLATE SYNTHASE TRUB1"/>
    <property type="match status" value="1"/>
</dbReference>
<dbReference type="PANTHER" id="PTHR13767">
    <property type="entry name" value="TRNA-PSEUDOURIDINE SYNTHASE"/>
    <property type="match status" value="1"/>
</dbReference>
<dbReference type="Pfam" id="PF09157">
    <property type="entry name" value="TruB-C_2"/>
    <property type="match status" value="1"/>
</dbReference>
<dbReference type="Pfam" id="PF16198">
    <property type="entry name" value="TruB_C_2"/>
    <property type="match status" value="1"/>
</dbReference>
<dbReference type="Pfam" id="PF01509">
    <property type="entry name" value="TruB_N"/>
    <property type="match status" value="1"/>
</dbReference>
<dbReference type="SUPFAM" id="SSF55120">
    <property type="entry name" value="Pseudouridine synthase"/>
    <property type="match status" value="1"/>
</dbReference>
<dbReference type="SUPFAM" id="SSF88697">
    <property type="entry name" value="PUA domain-like"/>
    <property type="match status" value="1"/>
</dbReference>
<gene>
    <name evidence="1" type="primary">truB</name>
    <name type="ordered locus">PM0756</name>
</gene>
<sequence>MAKPRKRGRDIDGVFLLDKPQGMSSNDIMQKVKRVFQANKAGHTGALDPLATGMLPICLGEATKFSQFLLDADKRYQVTAKLGERTDTSDAEGQVVETRDVQVDVQDILAALPHFRGNLMQVPTMFSALKHQGKPLYEYARAGITVEREARPITIFDLQFIAYDAPYLTLEVHCSKGTYIRTLVDDLGEYLGCGAHVTVLRRTAVANYPVEAMMNWDTLQVLAAQQDLALLDQHLLPTDSAVSALPALHLNQEQSKAISFGQRVKFDNPTQLTGQVRLFSDTQQFLGVALVDEHNVIRPQRLMTQNT</sequence>
<organism>
    <name type="scientific">Pasteurella multocida (strain Pm70)</name>
    <dbReference type="NCBI Taxonomy" id="272843"/>
    <lineage>
        <taxon>Bacteria</taxon>
        <taxon>Pseudomonadati</taxon>
        <taxon>Pseudomonadota</taxon>
        <taxon>Gammaproteobacteria</taxon>
        <taxon>Pasteurellales</taxon>
        <taxon>Pasteurellaceae</taxon>
        <taxon>Pasteurella</taxon>
    </lineage>
</organism>
<accession>Q9CMQ7</accession>
<proteinExistence type="inferred from homology"/>
<feature type="chain" id="PRO_0000121881" description="tRNA pseudouridine synthase B">
    <location>
        <begin position="1"/>
        <end position="307"/>
    </location>
</feature>
<feature type="active site" description="Nucleophile" evidence="1">
    <location>
        <position position="48"/>
    </location>
</feature>
<keyword id="KW-0413">Isomerase</keyword>
<keyword id="KW-1185">Reference proteome</keyword>
<keyword id="KW-0819">tRNA processing</keyword>
<reference key="1">
    <citation type="journal article" date="2001" name="Proc. Natl. Acad. Sci. U.S.A.">
        <title>Complete genomic sequence of Pasteurella multocida Pm70.</title>
        <authorList>
            <person name="May B.J."/>
            <person name="Zhang Q."/>
            <person name="Li L.L."/>
            <person name="Paustian M.L."/>
            <person name="Whittam T.S."/>
            <person name="Kapur V."/>
        </authorList>
    </citation>
    <scope>NUCLEOTIDE SEQUENCE [LARGE SCALE GENOMIC DNA]</scope>
    <source>
        <strain>Pm70</strain>
    </source>
</reference>
<protein>
    <recommendedName>
        <fullName evidence="1">tRNA pseudouridine synthase B</fullName>
        <ecNumber evidence="1">5.4.99.25</ecNumber>
    </recommendedName>
    <alternativeName>
        <fullName evidence="1">tRNA pseudouridine(55) synthase</fullName>
        <shortName evidence="1">Psi55 synthase</shortName>
    </alternativeName>
    <alternativeName>
        <fullName evidence="1">tRNA pseudouridylate synthase</fullName>
    </alternativeName>
    <alternativeName>
        <fullName evidence="1">tRNA-uridine isomerase</fullName>
    </alternativeName>
</protein>
<name>TRUB_PASMU</name>
<comment type="function">
    <text evidence="1">Responsible for synthesis of pseudouridine from uracil-55 in the psi GC loop of transfer RNAs.</text>
</comment>
<comment type="catalytic activity">
    <reaction evidence="1">
        <text>uridine(55) in tRNA = pseudouridine(55) in tRNA</text>
        <dbReference type="Rhea" id="RHEA:42532"/>
        <dbReference type="Rhea" id="RHEA-COMP:10101"/>
        <dbReference type="Rhea" id="RHEA-COMP:10102"/>
        <dbReference type="ChEBI" id="CHEBI:65314"/>
        <dbReference type="ChEBI" id="CHEBI:65315"/>
        <dbReference type="EC" id="5.4.99.25"/>
    </reaction>
</comment>
<comment type="similarity">
    <text evidence="1">Belongs to the pseudouridine synthase TruB family. Type 1 subfamily.</text>
</comment>
<evidence type="ECO:0000255" key="1">
    <source>
        <dbReference type="HAMAP-Rule" id="MF_01080"/>
    </source>
</evidence>